<accession>B8ZPN7</accession>
<feature type="chain" id="PRO_1000199014" description="Aspartate--tRNA ligase">
    <location>
        <begin position="1"/>
        <end position="587"/>
    </location>
</feature>
<feature type="region of interest" description="Aspartate" evidence="1">
    <location>
        <begin position="198"/>
        <end position="201"/>
    </location>
</feature>
<feature type="binding site" evidence="1">
    <location>
        <position position="174"/>
    </location>
    <ligand>
        <name>L-aspartate</name>
        <dbReference type="ChEBI" id="CHEBI:29991"/>
    </ligand>
</feature>
<feature type="binding site" evidence="1">
    <location>
        <begin position="220"/>
        <end position="222"/>
    </location>
    <ligand>
        <name>ATP</name>
        <dbReference type="ChEBI" id="CHEBI:30616"/>
    </ligand>
</feature>
<feature type="binding site" evidence="1">
    <location>
        <position position="220"/>
    </location>
    <ligand>
        <name>L-aspartate</name>
        <dbReference type="ChEBI" id="CHEBI:29991"/>
    </ligand>
</feature>
<feature type="binding site" evidence="1">
    <location>
        <position position="229"/>
    </location>
    <ligand>
        <name>ATP</name>
        <dbReference type="ChEBI" id="CHEBI:30616"/>
    </ligand>
</feature>
<feature type="binding site" evidence="1">
    <location>
        <position position="443"/>
    </location>
    <ligand>
        <name>L-aspartate</name>
        <dbReference type="ChEBI" id="CHEBI:29991"/>
    </ligand>
</feature>
<feature type="binding site" evidence="1">
    <location>
        <position position="477"/>
    </location>
    <ligand>
        <name>ATP</name>
        <dbReference type="ChEBI" id="CHEBI:30616"/>
    </ligand>
</feature>
<feature type="binding site" evidence="1">
    <location>
        <position position="484"/>
    </location>
    <ligand>
        <name>L-aspartate</name>
        <dbReference type="ChEBI" id="CHEBI:29991"/>
    </ligand>
</feature>
<feature type="binding site" evidence="1">
    <location>
        <begin position="529"/>
        <end position="532"/>
    </location>
    <ligand>
        <name>ATP</name>
        <dbReference type="ChEBI" id="CHEBI:30616"/>
    </ligand>
</feature>
<reference key="1">
    <citation type="journal article" date="2009" name="J. Bacteriol.">
        <title>Role of conjugative elements in the evolution of the multidrug-resistant pandemic clone Streptococcus pneumoniae Spain23F ST81.</title>
        <authorList>
            <person name="Croucher N.J."/>
            <person name="Walker D."/>
            <person name="Romero P."/>
            <person name="Lennard N."/>
            <person name="Paterson G.K."/>
            <person name="Bason N.C."/>
            <person name="Mitchell A.M."/>
            <person name="Quail M.A."/>
            <person name="Andrew P.W."/>
            <person name="Parkhill J."/>
            <person name="Bentley S.D."/>
            <person name="Mitchell T.J."/>
        </authorList>
    </citation>
    <scope>NUCLEOTIDE SEQUENCE [LARGE SCALE GENOMIC DNA]</scope>
    <source>
        <strain>ATCC 700669 / Spain 23F-1</strain>
    </source>
</reference>
<name>SYD_STRPJ</name>
<sequence length="587" mass="66238">MKRSMYAGRVREEHIGQEITLKGWVGRRRDLGGLIFIDLRDREGIMQLVINPEKVSAEVMATAESLRSEFVIEVTGQVAAREQANDKLPTGAVELNVTALIVLNTAKTTPFEIKDGIEANDDTRLRYRYLDLRRPEMLENLKLRAKVTHSIRNYLDELEFIDVETPFLSKSTPEGARDYLVPSRVNKGHFYALPQSPQITKQLLMNAGFDRYYQIVKCFRDEDLRGDRQPEFTQVDLETSFLTEQEIQDITEGLIARVMKETKGIEVTLPFPRMKYDDAMALYGSDKPDTRFDMLLQDLTEVVKGVDFKVFSEAPAVKAIVVKGAADNYSRKDIDKMTEVAKQYGAKGLAWVKVVDGELNGPVAKFLTGIQEELTTALALEDKDLVLFVADTLEVANATLGALRGRIAKELGLIDNDKFNFLWVVDWPMFEWSEEEGRYMSAHHPFTLPQEETAHELEGDLAKVRAIAYDIVLNGYELGGGSLRINQKDLQERMFKALGFSTEEANDQFGFLLEAMDYGFPPHGGLAIGLDRFVMLLAGEENIREVIAFPKNNKATDPMTQAPSTVALKQLEELSLQVEEDETNKTN</sequence>
<protein>
    <recommendedName>
        <fullName evidence="1">Aspartate--tRNA ligase</fullName>
        <ecNumber evidence="1">6.1.1.12</ecNumber>
    </recommendedName>
    <alternativeName>
        <fullName evidence="1">Aspartyl-tRNA synthetase</fullName>
        <shortName evidence="1">AspRS</shortName>
    </alternativeName>
</protein>
<keyword id="KW-0030">Aminoacyl-tRNA synthetase</keyword>
<keyword id="KW-0067">ATP-binding</keyword>
<keyword id="KW-0963">Cytoplasm</keyword>
<keyword id="KW-0436">Ligase</keyword>
<keyword id="KW-0547">Nucleotide-binding</keyword>
<keyword id="KW-0648">Protein biosynthesis</keyword>
<gene>
    <name evidence="1" type="primary">aspS</name>
    <name type="ordered locus">SPN23F21410</name>
</gene>
<evidence type="ECO:0000255" key="1">
    <source>
        <dbReference type="HAMAP-Rule" id="MF_00044"/>
    </source>
</evidence>
<comment type="function">
    <text evidence="1">Catalyzes the attachment of L-aspartate to tRNA(Asp) in a two-step reaction: L-aspartate is first activated by ATP to form Asp-AMP and then transferred to the acceptor end of tRNA(Asp).</text>
</comment>
<comment type="catalytic activity">
    <reaction evidence="1">
        <text>tRNA(Asp) + L-aspartate + ATP = L-aspartyl-tRNA(Asp) + AMP + diphosphate</text>
        <dbReference type="Rhea" id="RHEA:19649"/>
        <dbReference type="Rhea" id="RHEA-COMP:9660"/>
        <dbReference type="Rhea" id="RHEA-COMP:9678"/>
        <dbReference type="ChEBI" id="CHEBI:29991"/>
        <dbReference type="ChEBI" id="CHEBI:30616"/>
        <dbReference type="ChEBI" id="CHEBI:33019"/>
        <dbReference type="ChEBI" id="CHEBI:78442"/>
        <dbReference type="ChEBI" id="CHEBI:78516"/>
        <dbReference type="ChEBI" id="CHEBI:456215"/>
        <dbReference type="EC" id="6.1.1.12"/>
    </reaction>
</comment>
<comment type="subunit">
    <text evidence="1">Homodimer.</text>
</comment>
<comment type="subcellular location">
    <subcellularLocation>
        <location evidence="1">Cytoplasm</location>
    </subcellularLocation>
</comment>
<comment type="similarity">
    <text evidence="1">Belongs to the class-II aminoacyl-tRNA synthetase family. Type 1 subfamily.</text>
</comment>
<dbReference type="EC" id="6.1.1.12" evidence="1"/>
<dbReference type="EMBL" id="FM211187">
    <property type="protein sequence ID" value="CAR69878.1"/>
    <property type="molecule type" value="Genomic_DNA"/>
</dbReference>
<dbReference type="RefSeq" id="WP_000830880.1">
    <property type="nucleotide sequence ID" value="NC_011900.1"/>
</dbReference>
<dbReference type="SMR" id="B8ZPN7"/>
<dbReference type="KEGG" id="sne:SPN23F21410"/>
<dbReference type="HOGENOM" id="CLU_014330_3_2_9"/>
<dbReference type="GO" id="GO:0005737">
    <property type="term" value="C:cytoplasm"/>
    <property type="evidence" value="ECO:0007669"/>
    <property type="project" value="UniProtKB-SubCell"/>
</dbReference>
<dbReference type="GO" id="GO:0004815">
    <property type="term" value="F:aspartate-tRNA ligase activity"/>
    <property type="evidence" value="ECO:0007669"/>
    <property type="project" value="UniProtKB-UniRule"/>
</dbReference>
<dbReference type="GO" id="GO:0005524">
    <property type="term" value="F:ATP binding"/>
    <property type="evidence" value="ECO:0007669"/>
    <property type="project" value="UniProtKB-UniRule"/>
</dbReference>
<dbReference type="GO" id="GO:0140096">
    <property type="term" value="F:catalytic activity, acting on a protein"/>
    <property type="evidence" value="ECO:0007669"/>
    <property type="project" value="UniProtKB-ARBA"/>
</dbReference>
<dbReference type="GO" id="GO:0003676">
    <property type="term" value="F:nucleic acid binding"/>
    <property type="evidence" value="ECO:0007669"/>
    <property type="project" value="InterPro"/>
</dbReference>
<dbReference type="GO" id="GO:0016740">
    <property type="term" value="F:transferase activity"/>
    <property type="evidence" value="ECO:0007669"/>
    <property type="project" value="UniProtKB-ARBA"/>
</dbReference>
<dbReference type="GO" id="GO:0006422">
    <property type="term" value="P:aspartyl-tRNA aminoacylation"/>
    <property type="evidence" value="ECO:0007669"/>
    <property type="project" value="UniProtKB-UniRule"/>
</dbReference>
<dbReference type="CDD" id="cd00777">
    <property type="entry name" value="AspRS_core"/>
    <property type="match status" value="1"/>
</dbReference>
<dbReference type="CDD" id="cd04317">
    <property type="entry name" value="EcAspRS_like_N"/>
    <property type="match status" value="1"/>
</dbReference>
<dbReference type="Gene3D" id="3.30.930.10">
    <property type="entry name" value="Bira Bifunctional Protein, Domain 2"/>
    <property type="match status" value="1"/>
</dbReference>
<dbReference type="Gene3D" id="3.30.1360.30">
    <property type="entry name" value="GAD-like domain"/>
    <property type="match status" value="1"/>
</dbReference>
<dbReference type="Gene3D" id="2.40.50.140">
    <property type="entry name" value="Nucleic acid-binding proteins"/>
    <property type="match status" value="1"/>
</dbReference>
<dbReference type="HAMAP" id="MF_00044">
    <property type="entry name" value="Asp_tRNA_synth_type1"/>
    <property type="match status" value="1"/>
</dbReference>
<dbReference type="InterPro" id="IPR004364">
    <property type="entry name" value="Aa-tRNA-synt_II"/>
</dbReference>
<dbReference type="InterPro" id="IPR006195">
    <property type="entry name" value="aa-tRNA-synth_II"/>
</dbReference>
<dbReference type="InterPro" id="IPR045864">
    <property type="entry name" value="aa-tRNA-synth_II/BPL/LPL"/>
</dbReference>
<dbReference type="InterPro" id="IPR004524">
    <property type="entry name" value="Asp-tRNA-ligase_1"/>
</dbReference>
<dbReference type="InterPro" id="IPR047089">
    <property type="entry name" value="Asp-tRNA-ligase_1_N"/>
</dbReference>
<dbReference type="InterPro" id="IPR002312">
    <property type="entry name" value="Asp/Asn-tRNA-synth_IIb"/>
</dbReference>
<dbReference type="InterPro" id="IPR047090">
    <property type="entry name" value="AspRS_core"/>
</dbReference>
<dbReference type="InterPro" id="IPR004115">
    <property type="entry name" value="GAD-like_sf"/>
</dbReference>
<dbReference type="InterPro" id="IPR029351">
    <property type="entry name" value="GAD_dom"/>
</dbReference>
<dbReference type="InterPro" id="IPR012340">
    <property type="entry name" value="NA-bd_OB-fold"/>
</dbReference>
<dbReference type="InterPro" id="IPR004365">
    <property type="entry name" value="NA-bd_OB_tRNA"/>
</dbReference>
<dbReference type="NCBIfam" id="TIGR00459">
    <property type="entry name" value="aspS_bact"/>
    <property type="match status" value="1"/>
</dbReference>
<dbReference type="NCBIfam" id="NF001750">
    <property type="entry name" value="PRK00476.1"/>
    <property type="match status" value="1"/>
</dbReference>
<dbReference type="PANTHER" id="PTHR22594:SF5">
    <property type="entry name" value="ASPARTATE--TRNA LIGASE, MITOCHONDRIAL"/>
    <property type="match status" value="1"/>
</dbReference>
<dbReference type="PANTHER" id="PTHR22594">
    <property type="entry name" value="ASPARTYL/LYSYL-TRNA SYNTHETASE"/>
    <property type="match status" value="1"/>
</dbReference>
<dbReference type="Pfam" id="PF02938">
    <property type="entry name" value="GAD"/>
    <property type="match status" value="1"/>
</dbReference>
<dbReference type="Pfam" id="PF00152">
    <property type="entry name" value="tRNA-synt_2"/>
    <property type="match status" value="1"/>
</dbReference>
<dbReference type="Pfam" id="PF01336">
    <property type="entry name" value="tRNA_anti-codon"/>
    <property type="match status" value="1"/>
</dbReference>
<dbReference type="PRINTS" id="PR01042">
    <property type="entry name" value="TRNASYNTHASP"/>
</dbReference>
<dbReference type="SUPFAM" id="SSF55681">
    <property type="entry name" value="Class II aaRS and biotin synthetases"/>
    <property type="match status" value="1"/>
</dbReference>
<dbReference type="SUPFAM" id="SSF55261">
    <property type="entry name" value="GAD domain-like"/>
    <property type="match status" value="1"/>
</dbReference>
<dbReference type="SUPFAM" id="SSF50249">
    <property type="entry name" value="Nucleic acid-binding proteins"/>
    <property type="match status" value="1"/>
</dbReference>
<dbReference type="PROSITE" id="PS50862">
    <property type="entry name" value="AA_TRNA_LIGASE_II"/>
    <property type="match status" value="1"/>
</dbReference>
<organism>
    <name type="scientific">Streptococcus pneumoniae (strain ATCC 700669 / Spain 23F-1)</name>
    <dbReference type="NCBI Taxonomy" id="561276"/>
    <lineage>
        <taxon>Bacteria</taxon>
        <taxon>Bacillati</taxon>
        <taxon>Bacillota</taxon>
        <taxon>Bacilli</taxon>
        <taxon>Lactobacillales</taxon>
        <taxon>Streptococcaceae</taxon>
        <taxon>Streptococcus</taxon>
    </lineage>
</organism>
<proteinExistence type="inferred from homology"/>